<feature type="chain" id="PRO_0000062407" description="Ribulose bisphosphate carboxylase large chain">
    <location>
        <begin position="1" status="less than"/>
        <end position="416" status="greater than"/>
    </location>
</feature>
<feature type="active site" description="Proton acceptor" evidence="1">
    <location>
        <position position="152"/>
    </location>
</feature>
<feature type="active site" description="Proton acceptor" evidence="1">
    <location>
        <position position="271"/>
    </location>
</feature>
<feature type="binding site" description="in homodimeric partner" evidence="1">
    <location>
        <position position="100"/>
    </location>
    <ligand>
        <name>substrate</name>
    </ligand>
</feature>
<feature type="binding site" evidence="1">
    <location>
        <position position="150"/>
    </location>
    <ligand>
        <name>substrate</name>
    </ligand>
</feature>
<feature type="binding site" evidence="1">
    <location>
        <position position="154"/>
    </location>
    <ligand>
        <name>substrate</name>
    </ligand>
</feature>
<feature type="binding site" description="via carbamate group" evidence="1">
    <location>
        <position position="178"/>
    </location>
    <ligand>
        <name>Mg(2+)</name>
        <dbReference type="ChEBI" id="CHEBI:18420"/>
    </ligand>
</feature>
<feature type="binding site" evidence="1">
    <location>
        <position position="180"/>
    </location>
    <ligand>
        <name>Mg(2+)</name>
        <dbReference type="ChEBI" id="CHEBI:18420"/>
    </ligand>
</feature>
<feature type="binding site" evidence="1">
    <location>
        <position position="181"/>
    </location>
    <ligand>
        <name>Mg(2+)</name>
        <dbReference type="ChEBI" id="CHEBI:18420"/>
    </ligand>
</feature>
<feature type="binding site" evidence="1">
    <location>
        <position position="272"/>
    </location>
    <ligand>
        <name>substrate</name>
    </ligand>
</feature>
<feature type="binding site" evidence="1">
    <location>
        <position position="304"/>
    </location>
    <ligand>
        <name>substrate</name>
    </ligand>
</feature>
<feature type="binding site" evidence="1">
    <location>
        <position position="356"/>
    </location>
    <ligand>
        <name>substrate</name>
    </ligand>
</feature>
<feature type="site" description="Transition state stabilizer" evidence="1">
    <location>
        <position position="311"/>
    </location>
</feature>
<feature type="modified residue" description="N6-carboxylysine" evidence="1">
    <location>
        <position position="178"/>
    </location>
</feature>
<feature type="disulfide bond" description="Interchain; in linked form" evidence="1">
    <location>
        <position position="224"/>
    </location>
</feature>
<feature type="non-terminal residue">
    <location>
        <position position="1"/>
    </location>
</feature>
<feature type="non-terminal residue">
    <location>
        <position position="416"/>
    </location>
</feature>
<protein>
    <recommendedName>
        <fullName>Ribulose bisphosphate carboxylase large chain</fullName>
        <shortName>RuBisCO large subunit</shortName>
        <ecNumber>4.1.1.39</ecNumber>
    </recommendedName>
</protein>
<organism>
    <name type="scientific">Cheiropleuria bicuspis</name>
    <name type="common">Fern</name>
    <name type="synonym">Polypodium bicuspe</name>
    <dbReference type="NCBI Taxonomy" id="29634"/>
    <lineage>
        <taxon>Eukaryota</taxon>
        <taxon>Viridiplantae</taxon>
        <taxon>Streptophyta</taxon>
        <taxon>Embryophyta</taxon>
        <taxon>Tracheophyta</taxon>
        <taxon>Polypodiopsida</taxon>
        <taxon>Polypodiidae</taxon>
        <taxon>Gleicheniales</taxon>
        <taxon>Dipteridaceae</taxon>
        <taxon>Cheiropleuria</taxon>
    </lineage>
</organism>
<geneLocation type="chloroplast"/>
<sequence>YYTPKYETKDTDILAAFRMTPQPGVPPEEAGAAVAAESSTGTWTTVWTDGLTSLDRYKGRCYDIEPVAGEDNQYIAYVAYPLDLFEEGSVTNMFTSIVGNVFGFKALRALGLEDLRIPPAYSKTFIGPPHGIQVERDKLNKYGRPLLGCTIKPKLGLSAKNYGRAVYECLRGGLDSTKDDENVNSQPFMRWRDRFVSVAEALFKAQAETGEIKGHYLNATAGTCEEMMKRAAFARESGVPITMHDYLTGGFTANTSLAFYCRDNGLLLHIHRAMHAVIDRQRNHGIHFRVLAKALRMSGGDHVHAGTVVGKLEGERDVTLGFVDLLRDDYIEKDRSRGIYFTQDWVSMPGVFPVASGGIHVWHMPALTEIFGDDSVSQFGGGTLGHPGGNAPGAVANRVALEACVQARNEGRDLAR</sequence>
<dbReference type="EC" id="4.1.1.39"/>
<dbReference type="EMBL" id="U05607">
    <property type="protein sequence ID" value="AAA19891.1"/>
    <property type="molecule type" value="Genomic_DNA"/>
</dbReference>
<dbReference type="SMR" id="P43227"/>
<dbReference type="GO" id="GO:0009507">
    <property type="term" value="C:chloroplast"/>
    <property type="evidence" value="ECO:0007669"/>
    <property type="project" value="UniProtKB-SubCell"/>
</dbReference>
<dbReference type="GO" id="GO:0000287">
    <property type="term" value="F:magnesium ion binding"/>
    <property type="evidence" value="ECO:0007669"/>
    <property type="project" value="InterPro"/>
</dbReference>
<dbReference type="GO" id="GO:0004497">
    <property type="term" value="F:monooxygenase activity"/>
    <property type="evidence" value="ECO:0007669"/>
    <property type="project" value="UniProtKB-KW"/>
</dbReference>
<dbReference type="GO" id="GO:0016984">
    <property type="term" value="F:ribulose-bisphosphate carboxylase activity"/>
    <property type="evidence" value="ECO:0007669"/>
    <property type="project" value="UniProtKB-EC"/>
</dbReference>
<dbReference type="GO" id="GO:0009853">
    <property type="term" value="P:photorespiration"/>
    <property type="evidence" value="ECO:0007669"/>
    <property type="project" value="UniProtKB-KW"/>
</dbReference>
<dbReference type="GO" id="GO:0019253">
    <property type="term" value="P:reductive pentose-phosphate cycle"/>
    <property type="evidence" value="ECO:0007669"/>
    <property type="project" value="UniProtKB-KW"/>
</dbReference>
<dbReference type="Gene3D" id="3.20.20.110">
    <property type="entry name" value="Ribulose bisphosphate carboxylase, large subunit, C-terminal domain"/>
    <property type="match status" value="1"/>
</dbReference>
<dbReference type="Gene3D" id="3.30.70.150">
    <property type="entry name" value="RuBisCO large subunit, N-terminal domain"/>
    <property type="match status" value="1"/>
</dbReference>
<dbReference type="InterPro" id="IPR033966">
    <property type="entry name" value="RuBisCO"/>
</dbReference>
<dbReference type="InterPro" id="IPR000685">
    <property type="entry name" value="RuBisCO_lsu_C"/>
</dbReference>
<dbReference type="InterPro" id="IPR036376">
    <property type="entry name" value="RuBisCO_lsu_C_sf"/>
</dbReference>
<dbReference type="InterPro" id="IPR017443">
    <property type="entry name" value="RuBisCO_lsu_fd_N"/>
</dbReference>
<dbReference type="InterPro" id="IPR036422">
    <property type="entry name" value="RuBisCO_lsu_N_sf"/>
</dbReference>
<dbReference type="NCBIfam" id="NF003252">
    <property type="entry name" value="PRK04208.1"/>
    <property type="match status" value="1"/>
</dbReference>
<dbReference type="PANTHER" id="PTHR42704">
    <property type="entry name" value="RIBULOSE BISPHOSPHATE CARBOXYLASE"/>
    <property type="match status" value="1"/>
</dbReference>
<dbReference type="PANTHER" id="PTHR42704:SF17">
    <property type="entry name" value="RIBULOSE BISPHOSPHATE CARBOXYLASE LARGE CHAIN"/>
    <property type="match status" value="1"/>
</dbReference>
<dbReference type="Pfam" id="PF00016">
    <property type="entry name" value="RuBisCO_large"/>
    <property type="match status" value="1"/>
</dbReference>
<dbReference type="Pfam" id="PF02788">
    <property type="entry name" value="RuBisCO_large_N"/>
    <property type="match status" value="1"/>
</dbReference>
<dbReference type="SFLD" id="SFLDG01052">
    <property type="entry name" value="RuBisCO"/>
    <property type="match status" value="1"/>
</dbReference>
<dbReference type="SFLD" id="SFLDS00014">
    <property type="entry name" value="RuBisCO"/>
    <property type="match status" value="1"/>
</dbReference>
<dbReference type="SFLD" id="SFLDG00301">
    <property type="entry name" value="RuBisCO-like_proteins"/>
    <property type="match status" value="1"/>
</dbReference>
<dbReference type="SUPFAM" id="SSF51649">
    <property type="entry name" value="RuBisCo, C-terminal domain"/>
    <property type="match status" value="1"/>
</dbReference>
<dbReference type="SUPFAM" id="SSF54966">
    <property type="entry name" value="RuBisCO, large subunit, small (N-terminal) domain"/>
    <property type="match status" value="1"/>
</dbReference>
<keyword id="KW-0113">Calvin cycle</keyword>
<keyword id="KW-0120">Carbon dioxide fixation</keyword>
<keyword id="KW-0150">Chloroplast</keyword>
<keyword id="KW-1015">Disulfide bond</keyword>
<keyword id="KW-0456">Lyase</keyword>
<keyword id="KW-0460">Magnesium</keyword>
<keyword id="KW-0479">Metal-binding</keyword>
<keyword id="KW-0503">Monooxygenase</keyword>
<keyword id="KW-0560">Oxidoreductase</keyword>
<keyword id="KW-0601">Photorespiration</keyword>
<keyword id="KW-0602">Photosynthesis</keyword>
<keyword id="KW-0934">Plastid</keyword>
<reference key="1">
    <citation type="journal article" date="1994" name="Proc. Natl. Acad. Sci. U.S.A.">
        <title>rbcL gene sequences provide evidence for the evolutionary lineages of leptosporangiate ferns.</title>
        <authorList>
            <person name="Hasebe M."/>
            <person name="Omori T."/>
            <person name="Nakazawa M."/>
            <person name="Sano T."/>
            <person name="Kato M."/>
            <person name="Iwatsuki K."/>
        </authorList>
    </citation>
    <scope>NUCLEOTIDE SEQUENCE [GENOMIC DNA]</scope>
    <source>
        <tissue>Leaf</tissue>
    </source>
</reference>
<comment type="function">
    <text evidence="1">RuBisCO catalyzes two reactions: the carboxylation of D-ribulose 1,5-bisphosphate, the primary event in carbon dioxide fixation, as well as the oxidative fragmentation of the pentose substrate in the photorespiration process. Both reactions occur simultaneously and in competition at the same active site (By similarity).</text>
</comment>
<comment type="catalytic activity">
    <reaction>
        <text>2 (2R)-3-phosphoglycerate + 2 H(+) = D-ribulose 1,5-bisphosphate + CO2 + H2O</text>
        <dbReference type="Rhea" id="RHEA:23124"/>
        <dbReference type="ChEBI" id="CHEBI:15377"/>
        <dbReference type="ChEBI" id="CHEBI:15378"/>
        <dbReference type="ChEBI" id="CHEBI:16526"/>
        <dbReference type="ChEBI" id="CHEBI:57870"/>
        <dbReference type="ChEBI" id="CHEBI:58272"/>
        <dbReference type="EC" id="4.1.1.39"/>
    </reaction>
</comment>
<comment type="catalytic activity">
    <reaction>
        <text>D-ribulose 1,5-bisphosphate + O2 = 2-phosphoglycolate + (2R)-3-phosphoglycerate + 2 H(+)</text>
        <dbReference type="Rhea" id="RHEA:36631"/>
        <dbReference type="ChEBI" id="CHEBI:15378"/>
        <dbReference type="ChEBI" id="CHEBI:15379"/>
        <dbReference type="ChEBI" id="CHEBI:57870"/>
        <dbReference type="ChEBI" id="CHEBI:58033"/>
        <dbReference type="ChEBI" id="CHEBI:58272"/>
    </reaction>
</comment>
<comment type="cofactor">
    <cofactor evidence="1">
        <name>Mg(2+)</name>
        <dbReference type="ChEBI" id="CHEBI:18420"/>
    </cofactor>
    <text evidence="1">Binds 1 Mg(2+) ion per subunit.</text>
</comment>
<comment type="subunit">
    <text evidence="1">Heterohexadecamer of 8 large chains and 8 small chains; disulfide-linked. The disulfide link is formed within the large subunit homodimers (By similarity).</text>
</comment>
<comment type="subcellular location">
    <subcellularLocation>
        <location>Plastid</location>
        <location>Chloroplast</location>
    </subcellularLocation>
</comment>
<comment type="PTM">
    <text evidence="1">The disulfide bond which can form in the large chain dimeric partners within the hexadecamer appears to be associated with oxidative stress and protein turnover.</text>
</comment>
<comment type="miscellaneous">
    <text evidence="1">The basic functional RuBisCO is composed of a large chain homodimer in a 'head-to-tail' conformation. In form I RuBisCO this homodimer is arranged in a barrel-like tetramer with the small subunits forming a tetrameric 'cap' on each end of the 'barrel' (By similarity).</text>
</comment>
<comment type="similarity">
    <text evidence="2">Belongs to the RuBisCO large chain family. Type I subfamily.</text>
</comment>
<name>RBL_CHEBI</name>
<gene>
    <name type="primary">rbcL</name>
</gene>
<accession>P43227</accession>
<proteinExistence type="inferred from homology"/>
<evidence type="ECO:0000250" key="1"/>
<evidence type="ECO:0000305" key="2"/>